<proteinExistence type="inferred from homology"/>
<keyword id="KW-0067">ATP-binding</keyword>
<keyword id="KW-0963">Cytoplasm</keyword>
<keyword id="KW-0436">Ligase</keyword>
<keyword id="KW-0547">Nucleotide-binding</keyword>
<reference key="1">
    <citation type="journal article" date="2004" name="Proc. Natl. Acad. Sci. U.S.A.">
        <title>Complete genomes of two clinical Staphylococcus aureus strains: evidence for the rapid evolution of virulence and drug resistance.</title>
        <authorList>
            <person name="Holden M.T.G."/>
            <person name="Feil E.J."/>
            <person name="Lindsay J.A."/>
            <person name="Peacock S.J."/>
            <person name="Day N.P.J."/>
            <person name="Enright M.C."/>
            <person name="Foster T.J."/>
            <person name="Moore C.E."/>
            <person name="Hurst L."/>
            <person name="Atkin R."/>
            <person name="Barron A."/>
            <person name="Bason N."/>
            <person name="Bentley S.D."/>
            <person name="Chillingworth C."/>
            <person name="Chillingworth T."/>
            <person name="Churcher C."/>
            <person name="Clark L."/>
            <person name="Corton C."/>
            <person name="Cronin A."/>
            <person name="Doggett J."/>
            <person name="Dowd L."/>
            <person name="Feltwell T."/>
            <person name="Hance Z."/>
            <person name="Harris B."/>
            <person name="Hauser H."/>
            <person name="Holroyd S."/>
            <person name="Jagels K."/>
            <person name="James K.D."/>
            <person name="Lennard N."/>
            <person name="Line A."/>
            <person name="Mayes R."/>
            <person name="Moule S."/>
            <person name="Mungall K."/>
            <person name="Ormond D."/>
            <person name="Quail M.A."/>
            <person name="Rabbinowitsch E."/>
            <person name="Rutherford K.M."/>
            <person name="Sanders M."/>
            <person name="Sharp S."/>
            <person name="Simmonds M."/>
            <person name="Stevens K."/>
            <person name="Whitehead S."/>
            <person name="Barrell B.G."/>
            <person name="Spratt B.G."/>
            <person name="Parkhill J."/>
        </authorList>
    </citation>
    <scope>NUCLEOTIDE SEQUENCE [LARGE SCALE GENOMIC DNA]</scope>
    <source>
        <strain>MSSA476</strain>
    </source>
</reference>
<accession>Q6GAZ4</accession>
<feature type="chain" id="PRO_0000213154" description="D-alanine--D-alanyl carrier protein ligase">
    <location>
        <begin position="1"/>
        <end position="485"/>
    </location>
</feature>
<feature type="binding site" evidence="1">
    <location>
        <begin position="144"/>
        <end position="145"/>
    </location>
    <ligand>
        <name>ATP</name>
        <dbReference type="ChEBI" id="CHEBI:30616"/>
    </ligand>
</feature>
<feature type="binding site" evidence="1">
    <location>
        <position position="189"/>
    </location>
    <ligand>
        <name>D-alanine</name>
        <dbReference type="ChEBI" id="CHEBI:57416"/>
    </ligand>
</feature>
<feature type="binding site" evidence="1">
    <location>
        <begin position="284"/>
        <end position="289"/>
    </location>
    <ligand>
        <name>ATP</name>
        <dbReference type="ChEBI" id="CHEBI:30616"/>
    </ligand>
</feature>
<feature type="binding site" evidence="1">
    <location>
        <position position="293"/>
    </location>
    <ligand>
        <name>D-alanine</name>
        <dbReference type="ChEBI" id="CHEBI:57416"/>
    </ligand>
</feature>
<feature type="binding site" evidence="1">
    <location>
        <position position="365"/>
    </location>
    <ligand>
        <name>ATP</name>
        <dbReference type="ChEBI" id="CHEBI:30616"/>
    </ligand>
</feature>
<feature type="binding site" evidence="1">
    <location>
        <position position="473"/>
    </location>
    <ligand>
        <name>ATP</name>
        <dbReference type="ChEBI" id="CHEBI:30616"/>
    </ligand>
</feature>
<feature type="binding site" evidence="1">
    <location>
        <position position="473"/>
    </location>
    <ligand>
        <name>D-alanine</name>
        <dbReference type="ChEBI" id="CHEBI:57416"/>
    </ligand>
</feature>
<organism>
    <name type="scientific">Staphylococcus aureus (strain MSSA476)</name>
    <dbReference type="NCBI Taxonomy" id="282459"/>
    <lineage>
        <taxon>Bacteria</taxon>
        <taxon>Bacillati</taxon>
        <taxon>Bacillota</taxon>
        <taxon>Bacilli</taxon>
        <taxon>Bacillales</taxon>
        <taxon>Staphylococcaceae</taxon>
        <taxon>Staphylococcus</taxon>
    </lineage>
</organism>
<comment type="function">
    <text evidence="1">Catalyzes the first step in the D-alanylation of lipoteichoic acid (LTA), the activation of D-alanine and its transfer onto the D-alanyl carrier protein (Dcp) DltC. In an ATP-dependent two-step reaction, forms a high energy D-alanyl-AMP intermediate, followed by transfer of the D-alanyl residue as a thiol ester to the phosphopantheinyl prosthetic group of the Dcp. D-alanylation of LTA plays an important role in modulating the properties of the cell wall in Gram-positive bacteria, influencing the net charge of the cell wall.</text>
</comment>
<comment type="catalytic activity">
    <reaction evidence="1">
        <text>holo-[D-alanyl-carrier protein] + D-alanine + ATP = D-alanyl-[D-alanyl-carrier protein] + AMP + diphosphate</text>
        <dbReference type="Rhea" id="RHEA:55132"/>
        <dbReference type="Rhea" id="RHEA-COMP:14102"/>
        <dbReference type="Rhea" id="RHEA-COMP:14103"/>
        <dbReference type="ChEBI" id="CHEBI:30616"/>
        <dbReference type="ChEBI" id="CHEBI:33019"/>
        <dbReference type="ChEBI" id="CHEBI:57416"/>
        <dbReference type="ChEBI" id="CHEBI:64479"/>
        <dbReference type="ChEBI" id="CHEBI:138620"/>
        <dbReference type="ChEBI" id="CHEBI:456215"/>
        <dbReference type="EC" id="6.2.1.54"/>
    </reaction>
</comment>
<comment type="pathway">
    <text evidence="1">Cell wall biogenesis; lipoteichoic acid biosynthesis.</text>
</comment>
<comment type="subcellular location">
    <subcellularLocation>
        <location evidence="1">Cytoplasm</location>
    </subcellularLocation>
</comment>
<comment type="similarity">
    <text evidence="1">Belongs to the ATP-dependent AMP-binding enzyme family. DltA subfamily.</text>
</comment>
<evidence type="ECO:0000255" key="1">
    <source>
        <dbReference type="HAMAP-Rule" id="MF_00593"/>
    </source>
</evidence>
<name>DLTA_STAAS</name>
<dbReference type="EC" id="6.2.1.54" evidence="1"/>
<dbReference type="EMBL" id="BX571857">
    <property type="protein sequence ID" value="CAG42577.1"/>
    <property type="molecule type" value="Genomic_DNA"/>
</dbReference>
<dbReference type="RefSeq" id="WP_000129653.1">
    <property type="nucleotide sequence ID" value="NC_002953.3"/>
</dbReference>
<dbReference type="SMR" id="Q6GAZ4"/>
<dbReference type="KEGG" id="sas:SAS0802"/>
<dbReference type="HOGENOM" id="CLU_000022_2_12_9"/>
<dbReference type="UniPathway" id="UPA00556"/>
<dbReference type="GO" id="GO:0005737">
    <property type="term" value="C:cytoplasm"/>
    <property type="evidence" value="ECO:0007669"/>
    <property type="project" value="UniProtKB-SubCell"/>
</dbReference>
<dbReference type="GO" id="GO:0005524">
    <property type="term" value="F:ATP binding"/>
    <property type="evidence" value="ECO:0007669"/>
    <property type="project" value="UniProtKB-KW"/>
</dbReference>
<dbReference type="GO" id="GO:0047473">
    <property type="term" value="F:D-alanine [D-alanyl carrier protein] ligase activity"/>
    <property type="evidence" value="ECO:0007669"/>
    <property type="project" value="UniProtKB-UniRule"/>
</dbReference>
<dbReference type="GO" id="GO:0070395">
    <property type="term" value="P:lipoteichoic acid biosynthetic process"/>
    <property type="evidence" value="ECO:0007669"/>
    <property type="project" value="UniProtKB-UniRule"/>
</dbReference>
<dbReference type="CDD" id="cd05945">
    <property type="entry name" value="DltA"/>
    <property type="match status" value="1"/>
</dbReference>
<dbReference type="FunFam" id="3.30.300.30:FF:000012">
    <property type="entry name" value="D-alanine--D-alanyl carrier protein ligase"/>
    <property type="match status" value="1"/>
</dbReference>
<dbReference type="Gene3D" id="3.30.300.30">
    <property type="match status" value="1"/>
</dbReference>
<dbReference type="Gene3D" id="3.40.50.12780">
    <property type="entry name" value="N-terminal domain of ligase-like"/>
    <property type="match status" value="1"/>
</dbReference>
<dbReference type="HAMAP" id="MF_00593">
    <property type="entry name" value="DltA"/>
    <property type="match status" value="1"/>
</dbReference>
<dbReference type="InterPro" id="IPR010071">
    <property type="entry name" value="AA_adenyl_dom"/>
</dbReference>
<dbReference type="InterPro" id="IPR025110">
    <property type="entry name" value="AMP-bd_C"/>
</dbReference>
<dbReference type="InterPro" id="IPR045851">
    <property type="entry name" value="AMP-bd_C_sf"/>
</dbReference>
<dbReference type="InterPro" id="IPR000873">
    <property type="entry name" value="AMP-dep_synth/lig_dom"/>
</dbReference>
<dbReference type="InterPro" id="IPR042099">
    <property type="entry name" value="ANL_N_sf"/>
</dbReference>
<dbReference type="InterPro" id="IPR010072">
    <property type="entry name" value="DltA"/>
</dbReference>
<dbReference type="InterPro" id="IPR044507">
    <property type="entry name" value="DltA-like"/>
</dbReference>
<dbReference type="NCBIfam" id="TIGR01733">
    <property type="entry name" value="AA-adenyl-dom"/>
    <property type="match status" value="1"/>
</dbReference>
<dbReference type="NCBIfam" id="TIGR01734">
    <property type="entry name" value="D-ala-DACP-lig"/>
    <property type="match status" value="1"/>
</dbReference>
<dbReference type="NCBIfam" id="NF003417">
    <property type="entry name" value="PRK04813.1"/>
    <property type="match status" value="1"/>
</dbReference>
<dbReference type="PANTHER" id="PTHR45398">
    <property type="match status" value="1"/>
</dbReference>
<dbReference type="PANTHER" id="PTHR45398:SF1">
    <property type="entry name" value="ENZYME, PUTATIVE (JCVI)-RELATED"/>
    <property type="match status" value="1"/>
</dbReference>
<dbReference type="Pfam" id="PF00501">
    <property type="entry name" value="AMP-binding"/>
    <property type="match status" value="1"/>
</dbReference>
<dbReference type="Pfam" id="PF13193">
    <property type="entry name" value="AMP-binding_C"/>
    <property type="match status" value="1"/>
</dbReference>
<dbReference type="SUPFAM" id="SSF56801">
    <property type="entry name" value="Acetyl-CoA synthetase-like"/>
    <property type="match status" value="1"/>
</dbReference>
<sequence>MTDIINKLQAFADANPQSIAVRHTTDELTYQQLMDESSKLAHRLQGSKKPMILFGHMSPYMIVGMIGAIKAGCGYVPVDTSIPEDRIKMIINKVQPEFVFNTTDESFESLEGEVFTIEDIKTSQDPVIFDSQIKDNDTVYTIFTSGSTGEPKGVQIEYASLVQFTEWMLELNKSGNEQQWLNQAPFSFDLSVMAIYPCLASGGTLNLVDKNMINKPKLLNEMLTATPINIWVSTPSFMEMCLLLPTLNEEQYGSLNEFFFCGEILPHRAAKALVNRFPSATIYNTYGPTEATVAVTSIQITQEILDQYPTLPVGVERPGARLSTTDEGELVIEGQSVSLGYLKNDQKTAEVFNFDDGIRTYHTGDKAKFENGQWFIQGRIDFQIKLNGYRMELEEIETQLRQSEFVKEAIVVPVYKNDKVIHLIGAIVPTTEVTDNAEMTKNIKNDLKSRLPEYMIPRKFEWMEQLPLTSNGKIDRKKIAEVING</sequence>
<gene>
    <name evidence="1" type="primary">dltA</name>
    <name type="ordered locus">SAS0802</name>
</gene>
<protein>
    <recommendedName>
        <fullName evidence="1">D-alanine--D-alanyl carrier protein ligase</fullName>
        <shortName evidence="1">DCL</shortName>
        <ecNumber evidence="1">6.2.1.54</ecNumber>
    </recommendedName>
    <alternativeName>
        <fullName evidence="1">D-alanine--poly(phosphoribitol) ligase subunit 1</fullName>
    </alternativeName>
    <alternativeName>
        <fullName evidence="1">D-alanine-activating enzyme</fullName>
        <shortName evidence="1">DAE</shortName>
    </alternativeName>
</protein>